<evidence type="ECO:0000256" key="1">
    <source>
        <dbReference type="SAM" id="MobiDB-lite"/>
    </source>
</evidence>
<evidence type="ECO:0000305" key="2"/>
<keyword id="KW-1185">Reference proteome</keyword>
<keyword id="KW-0346">Stress response</keyword>
<protein>
    <recommendedName>
        <fullName>Late embryogenesis abundant protein Lea5-D</fullName>
    </recommendedName>
</protein>
<organism>
    <name type="scientific">Gossypium hirsutum</name>
    <name type="common">Upland cotton</name>
    <name type="synonym">Gossypium mexicanum</name>
    <dbReference type="NCBI Taxonomy" id="3635"/>
    <lineage>
        <taxon>Eukaryota</taxon>
        <taxon>Viridiplantae</taxon>
        <taxon>Streptophyta</taxon>
        <taxon>Embryophyta</taxon>
        <taxon>Tracheophyta</taxon>
        <taxon>Spermatophyta</taxon>
        <taxon>Magnoliopsida</taxon>
        <taxon>eudicotyledons</taxon>
        <taxon>Gunneridae</taxon>
        <taxon>Pentapetalae</taxon>
        <taxon>rosids</taxon>
        <taxon>malvids</taxon>
        <taxon>Malvales</taxon>
        <taxon>Malvaceae</taxon>
        <taxon>Malvoideae</taxon>
        <taxon>Gossypium</taxon>
    </lineage>
</organism>
<sequence>MARSVSSFKLLGASIFDGLYVSISRRGYSGAPPAAVTASFGRPGAMGKVERRDAMKESSSSETRAYSSAWAPDPVTGYYRPENCGAEIDAAELREMLLNHRVRSQ</sequence>
<proteinExistence type="evidence at transcript level"/>
<comment type="induction">
    <text>By water stress; in leaves.</text>
</comment>
<comment type="similarity">
    <text evidence="2">Belongs to the LEA type 3 family.</text>
</comment>
<feature type="chain" id="PRO_0000221239" description="Late embryogenesis abundant protein Lea5-D">
    <location>
        <begin position="1"/>
        <end position="105"/>
    </location>
</feature>
<feature type="region of interest" description="Disordered" evidence="1">
    <location>
        <begin position="48"/>
        <end position="67"/>
    </location>
</feature>
<feature type="compositionally biased region" description="Low complexity" evidence="1">
    <location>
        <begin position="57"/>
        <end position="67"/>
    </location>
</feature>
<gene>
    <name type="primary">LEA5-D</name>
</gene>
<reference key="1">
    <citation type="journal article" date="1993" name="Plant Physiol.">
        <title>Cotton Lea5 and Lea14 encode atypical late embryogenesis-abundant proteins.</title>
        <authorList>
            <person name="Galau G.A."/>
            <person name="Wang H.Y.-C."/>
            <person name="Hughes D.W."/>
        </authorList>
    </citation>
    <scope>NUCLEOTIDE SEQUENCE [GENOMIC DNA / MRNA]</scope>
    <source>
        <strain>cv. Coker 201</strain>
        <tissue>Cotyledon</tissue>
    </source>
</reference>
<dbReference type="EMBL" id="M88323">
    <property type="protein sequence ID" value="AAA18544.1"/>
    <property type="molecule type" value="mRNA"/>
</dbReference>
<dbReference type="EMBL" id="L01102">
    <property type="protein sequence ID" value="AAA18526.1"/>
    <property type="molecule type" value="Genomic_DNA"/>
</dbReference>
<dbReference type="PIR" id="T09877">
    <property type="entry name" value="T09877"/>
</dbReference>
<dbReference type="RefSeq" id="XP_016700814.1">
    <property type="nucleotide sequence ID" value="XM_016845325.1"/>
</dbReference>
<dbReference type="STRING" id="3635.P46522"/>
<dbReference type="PaxDb" id="3635-P46522"/>
<dbReference type="KEGG" id="ghi:107916177"/>
<dbReference type="OMA" id="PINHTPE"/>
<dbReference type="Proteomes" id="UP000189702">
    <property type="component" value="Chromosome 22"/>
</dbReference>
<dbReference type="GO" id="GO:0006950">
    <property type="term" value="P:response to stress"/>
    <property type="evidence" value="ECO:0000318"/>
    <property type="project" value="GO_Central"/>
</dbReference>
<dbReference type="InterPro" id="IPR004926">
    <property type="entry name" value="LEA_3a"/>
</dbReference>
<dbReference type="PANTHER" id="PTHR33509">
    <property type="entry name" value="LATE EMBRYOGENIS ABUNDANT PROTEIN 2-RELATED"/>
    <property type="match status" value="1"/>
</dbReference>
<dbReference type="PANTHER" id="PTHR33509:SF34">
    <property type="entry name" value="LATE EMBRYOGENIS ABUNDANT PROTEIN 41"/>
    <property type="match status" value="1"/>
</dbReference>
<dbReference type="Pfam" id="PF03242">
    <property type="entry name" value="LEA_3a"/>
    <property type="match status" value="1"/>
</dbReference>
<accession>P46522</accession>
<name>LEA5D_GOSHI</name>